<accession>Q63Y23</accession>
<dbReference type="EC" id="2.3.1.47" evidence="1"/>
<dbReference type="EMBL" id="BX571965">
    <property type="protein sequence ID" value="CAH34354.1"/>
    <property type="molecule type" value="Genomic_DNA"/>
</dbReference>
<dbReference type="RefSeq" id="WP_004189736.1">
    <property type="nucleotide sequence ID" value="NZ_CP009538.1"/>
</dbReference>
<dbReference type="RefSeq" id="YP_106992.1">
    <property type="nucleotide sequence ID" value="NC_006350.1"/>
</dbReference>
<dbReference type="SMR" id="Q63Y23"/>
<dbReference type="STRING" id="272560.BPSL0366"/>
<dbReference type="GeneID" id="93058884"/>
<dbReference type="KEGG" id="bps:BPSL0366"/>
<dbReference type="PATRIC" id="fig|272560.51.peg.1304"/>
<dbReference type="eggNOG" id="COG0156">
    <property type="taxonomic scope" value="Bacteria"/>
</dbReference>
<dbReference type="UniPathway" id="UPA00078"/>
<dbReference type="Proteomes" id="UP000000605">
    <property type="component" value="Chromosome 1"/>
</dbReference>
<dbReference type="GO" id="GO:0008710">
    <property type="term" value="F:8-amino-7-oxononanoate synthase activity"/>
    <property type="evidence" value="ECO:0007669"/>
    <property type="project" value="UniProtKB-UniRule"/>
</dbReference>
<dbReference type="GO" id="GO:0030170">
    <property type="term" value="F:pyridoxal phosphate binding"/>
    <property type="evidence" value="ECO:0007669"/>
    <property type="project" value="UniProtKB-UniRule"/>
</dbReference>
<dbReference type="GO" id="GO:0009102">
    <property type="term" value="P:biotin biosynthetic process"/>
    <property type="evidence" value="ECO:0007669"/>
    <property type="project" value="UniProtKB-UniRule"/>
</dbReference>
<dbReference type="Gene3D" id="3.90.1150.10">
    <property type="entry name" value="Aspartate Aminotransferase, domain 1"/>
    <property type="match status" value="1"/>
</dbReference>
<dbReference type="Gene3D" id="3.40.640.10">
    <property type="entry name" value="Type I PLP-dependent aspartate aminotransferase-like (Major domain)"/>
    <property type="match status" value="1"/>
</dbReference>
<dbReference type="HAMAP" id="MF_01693">
    <property type="entry name" value="BioF_aminotrans_2"/>
    <property type="match status" value="1"/>
</dbReference>
<dbReference type="InterPro" id="IPR004839">
    <property type="entry name" value="Aminotransferase_I/II_large"/>
</dbReference>
<dbReference type="InterPro" id="IPR050087">
    <property type="entry name" value="AON_synthase_class-II"/>
</dbReference>
<dbReference type="InterPro" id="IPR004723">
    <property type="entry name" value="AONS_Archaea/Proteobacteria"/>
</dbReference>
<dbReference type="InterPro" id="IPR022834">
    <property type="entry name" value="AONS_Proteobacteria"/>
</dbReference>
<dbReference type="InterPro" id="IPR015424">
    <property type="entry name" value="PyrdxlP-dep_Trfase"/>
</dbReference>
<dbReference type="InterPro" id="IPR015421">
    <property type="entry name" value="PyrdxlP-dep_Trfase_major"/>
</dbReference>
<dbReference type="InterPro" id="IPR015422">
    <property type="entry name" value="PyrdxlP-dep_Trfase_small"/>
</dbReference>
<dbReference type="NCBIfam" id="TIGR00858">
    <property type="entry name" value="bioF"/>
    <property type="match status" value="1"/>
</dbReference>
<dbReference type="PANTHER" id="PTHR13693:SF100">
    <property type="entry name" value="8-AMINO-7-OXONONANOATE SYNTHASE"/>
    <property type="match status" value="1"/>
</dbReference>
<dbReference type="PANTHER" id="PTHR13693">
    <property type="entry name" value="CLASS II AMINOTRANSFERASE/8-AMINO-7-OXONONANOATE SYNTHASE"/>
    <property type="match status" value="1"/>
</dbReference>
<dbReference type="Pfam" id="PF00155">
    <property type="entry name" value="Aminotran_1_2"/>
    <property type="match status" value="1"/>
</dbReference>
<dbReference type="SUPFAM" id="SSF53383">
    <property type="entry name" value="PLP-dependent transferases"/>
    <property type="match status" value="1"/>
</dbReference>
<name>BIOF_BURPS</name>
<keyword id="KW-0093">Biotin biosynthesis</keyword>
<keyword id="KW-0663">Pyridoxal phosphate</keyword>
<keyword id="KW-1185">Reference proteome</keyword>
<keyword id="KW-0808">Transferase</keyword>
<comment type="function">
    <text evidence="1">Catalyzes the decarboxylative condensation of pimeloyl-[acyl-carrier protein] and L-alanine to produce 8-amino-7-oxononanoate (AON), [acyl-carrier protein], and carbon dioxide.</text>
</comment>
<comment type="catalytic activity">
    <reaction evidence="1">
        <text>6-carboxyhexanoyl-[ACP] + L-alanine + H(+) = (8S)-8-amino-7-oxononanoate + holo-[ACP] + CO2</text>
        <dbReference type="Rhea" id="RHEA:42288"/>
        <dbReference type="Rhea" id="RHEA-COMP:9685"/>
        <dbReference type="Rhea" id="RHEA-COMP:9955"/>
        <dbReference type="ChEBI" id="CHEBI:15378"/>
        <dbReference type="ChEBI" id="CHEBI:16526"/>
        <dbReference type="ChEBI" id="CHEBI:57972"/>
        <dbReference type="ChEBI" id="CHEBI:64479"/>
        <dbReference type="ChEBI" id="CHEBI:78846"/>
        <dbReference type="ChEBI" id="CHEBI:149468"/>
        <dbReference type="EC" id="2.3.1.47"/>
    </reaction>
</comment>
<comment type="cofactor">
    <cofactor evidence="1">
        <name>pyridoxal 5'-phosphate</name>
        <dbReference type="ChEBI" id="CHEBI:597326"/>
    </cofactor>
</comment>
<comment type="pathway">
    <text evidence="1">Cofactor biosynthesis; biotin biosynthesis.</text>
</comment>
<comment type="subunit">
    <text evidence="1">Homodimer.</text>
</comment>
<comment type="similarity">
    <text evidence="1">Belongs to the class-II pyridoxal-phosphate-dependent aminotransferase family. BioF subfamily.</text>
</comment>
<protein>
    <recommendedName>
        <fullName evidence="1">8-amino-7-oxononanoate synthase</fullName>
        <shortName evidence="1">AONS</shortName>
        <ecNumber evidence="1">2.3.1.47</ecNumber>
    </recommendedName>
    <alternativeName>
        <fullName evidence="1">7-keto-8-amino-pelargonic acid synthase</fullName>
        <shortName evidence="1">7-KAP synthase</shortName>
        <shortName evidence="1">KAPA synthase</shortName>
    </alternativeName>
    <alternativeName>
        <fullName evidence="1">8-amino-7-ketopelargonate synthase</fullName>
    </alternativeName>
</protein>
<reference key="1">
    <citation type="journal article" date="2004" name="Proc. Natl. Acad. Sci. U.S.A.">
        <title>Genomic plasticity of the causative agent of melioidosis, Burkholderia pseudomallei.</title>
        <authorList>
            <person name="Holden M.T.G."/>
            <person name="Titball R.W."/>
            <person name="Peacock S.J."/>
            <person name="Cerdeno-Tarraga A.-M."/>
            <person name="Atkins T."/>
            <person name="Crossman L.C."/>
            <person name="Pitt T."/>
            <person name="Churcher C."/>
            <person name="Mungall K.L."/>
            <person name="Bentley S.D."/>
            <person name="Sebaihia M."/>
            <person name="Thomson N.R."/>
            <person name="Bason N."/>
            <person name="Beacham I.R."/>
            <person name="Brooks K."/>
            <person name="Brown K.A."/>
            <person name="Brown N.F."/>
            <person name="Challis G.L."/>
            <person name="Cherevach I."/>
            <person name="Chillingworth T."/>
            <person name="Cronin A."/>
            <person name="Crossett B."/>
            <person name="Davis P."/>
            <person name="DeShazer D."/>
            <person name="Feltwell T."/>
            <person name="Fraser A."/>
            <person name="Hance Z."/>
            <person name="Hauser H."/>
            <person name="Holroyd S."/>
            <person name="Jagels K."/>
            <person name="Keith K.E."/>
            <person name="Maddison M."/>
            <person name="Moule S."/>
            <person name="Price C."/>
            <person name="Quail M.A."/>
            <person name="Rabbinowitsch E."/>
            <person name="Rutherford K."/>
            <person name="Sanders M."/>
            <person name="Simmonds M."/>
            <person name="Songsivilai S."/>
            <person name="Stevens K."/>
            <person name="Tumapa S."/>
            <person name="Vesaratchavest M."/>
            <person name="Whitehead S."/>
            <person name="Yeats C."/>
            <person name="Barrell B.G."/>
            <person name="Oyston P.C.F."/>
            <person name="Parkhill J."/>
        </authorList>
    </citation>
    <scope>NUCLEOTIDE SEQUENCE [LARGE SCALE GENOMIC DNA]</scope>
    <source>
        <strain>K96243</strain>
    </source>
</reference>
<sequence>MNPLATLEQGLADIDAQGLRRCRRVADTACGAHMTVDGRAIIGFASNDYLGLAAHPRLVEAFAEGARRYGSGSGGSHLLGGHSRAHATLEDELAAFSGGFSDAPRALYFSTGYMANLAALTALAGRGATIFSDALNHASLIDGARLSRANVQIYPHGDADALDARLRACDAPTKLIVSDTVFSMDGDVAPLARLVALAETHGAWLVVDDAHGFGVLGPQGRGALAAHGLRSPNLVYVGTLGKAAGVAGAFVVAHETVIEWLVQRARSYIFTTAAPPSVACAVSASLAVIASDEGDARRAHLGALIKRTRAILRATHWQPVDSHTAVQPLVIGSNEATLAAMAALDAQGLWVPAIRPPTVPAGTSRLRISLSAAHSFDDLARLEAALVTPIGAAA</sequence>
<evidence type="ECO:0000255" key="1">
    <source>
        <dbReference type="HAMAP-Rule" id="MF_01693"/>
    </source>
</evidence>
<proteinExistence type="inferred from homology"/>
<feature type="chain" id="PRO_0000380943" description="8-amino-7-oxononanoate synthase">
    <location>
        <begin position="1"/>
        <end position="394"/>
    </location>
</feature>
<feature type="binding site" evidence="1">
    <location>
        <position position="21"/>
    </location>
    <ligand>
        <name>substrate</name>
    </ligand>
</feature>
<feature type="binding site" evidence="1">
    <location>
        <begin position="112"/>
        <end position="113"/>
    </location>
    <ligand>
        <name>pyridoxal 5'-phosphate</name>
        <dbReference type="ChEBI" id="CHEBI:597326"/>
    </ligand>
</feature>
<feature type="binding site" evidence="1">
    <location>
        <position position="137"/>
    </location>
    <ligand>
        <name>substrate</name>
    </ligand>
</feature>
<feature type="binding site" evidence="1">
    <location>
        <position position="183"/>
    </location>
    <ligand>
        <name>pyridoxal 5'-phosphate</name>
        <dbReference type="ChEBI" id="CHEBI:597326"/>
    </ligand>
</feature>
<feature type="binding site" evidence="1">
    <location>
        <position position="211"/>
    </location>
    <ligand>
        <name>pyridoxal 5'-phosphate</name>
        <dbReference type="ChEBI" id="CHEBI:597326"/>
    </ligand>
</feature>
<feature type="binding site" evidence="1">
    <location>
        <position position="239"/>
    </location>
    <ligand>
        <name>pyridoxal 5'-phosphate</name>
        <dbReference type="ChEBI" id="CHEBI:597326"/>
    </ligand>
</feature>
<feature type="binding site" evidence="1">
    <location>
        <position position="358"/>
    </location>
    <ligand>
        <name>substrate</name>
    </ligand>
</feature>
<feature type="modified residue" description="N6-(pyridoxal phosphate)lysine" evidence="1">
    <location>
        <position position="242"/>
    </location>
</feature>
<gene>
    <name evidence="1" type="primary">bioF</name>
    <name type="ordered locus">BPSL0366</name>
</gene>
<organism>
    <name type="scientific">Burkholderia pseudomallei (strain K96243)</name>
    <dbReference type="NCBI Taxonomy" id="272560"/>
    <lineage>
        <taxon>Bacteria</taxon>
        <taxon>Pseudomonadati</taxon>
        <taxon>Pseudomonadota</taxon>
        <taxon>Betaproteobacteria</taxon>
        <taxon>Burkholderiales</taxon>
        <taxon>Burkholderiaceae</taxon>
        <taxon>Burkholderia</taxon>
        <taxon>pseudomallei group</taxon>
    </lineage>
</organism>